<protein>
    <recommendedName>
        <fullName evidence="1">ATP synthase subunit beta</fullName>
        <ecNumber evidence="1">7.1.2.2</ecNumber>
    </recommendedName>
    <alternativeName>
        <fullName evidence="1">ATP synthase F1 sector subunit beta</fullName>
    </alternativeName>
    <alternativeName>
        <fullName evidence="1">F-ATPase subunit beta</fullName>
    </alternativeName>
</protein>
<gene>
    <name evidence="1" type="primary">atpD</name>
    <name type="ordered locus">FTM_0128</name>
</gene>
<name>ATPB_FRATM</name>
<organism>
    <name type="scientific">Francisella tularensis subsp. mediasiatica (strain FSC147)</name>
    <dbReference type="NCBI Taxonomy" id="441952"/>
    <lineage>
        <taxon>Bacteria</taxon>
        <taxon>Pseudomonadati</taxon>
        <taxon>Pseudomonadota</taxon>
        <taxon>Gammaproteobacteria</taxon>
        <taxon>Thiotrichales</taxon>
        <taxon>Francisellaceae</taxon>
        <taxon>Francisella</taxon>
    </lineage>
</organism>
<keyword id="KW-0066">ATP synthesis</keyword>
<keyword id="KW-0067">ATP-binding</keyword>
<keyword id="KW-0997">Cell inner membrane</keyword>
<keyword id="KW-1003">Cell membrane</keyword>
<keyword id="KW-0139">CF(1)</keyword>
<keyword id="KW-0375">Hydrogen ion transport</keyword>
<keyword id="KW-0406">Ion transport</keyword>
<keyword id="KW-0472">Membrane</keyword>
<keyword id="KW-0547">Nucleotide-binding</keyword>
<keyword id="KW-1278">Translocase</keyword>
<keyword id="KW-0813">Transport</keyword>
<proteinExistence type="inferred from homology"/>
<sequence>MSTGKIIQVIGAVIDVEFARDNTPKVYDALNVVEAGLVLEVQQQIGDGVVRTIAMGSSDGLRRGMEVKNTNAPISVPVGHGTLGRIMNVLGEPIDEAGPIEYTEKRSIHQAPPAYDELALSTEILETGIKVVDLICPFAKGGKVGLFGGAGVGKTVTMMELINNIAKEHSGYSVFAGVGERTREGNDFYYEMKDSNVLDKVSLVYGQMNEPPGNRLRVALSGLTIAEGFRDEKRDVLMFIDNIYRYTLAGTEVSALLGRMPSAVGYQPTLAAEMGALQERITSTKTGSITSVQAVYVPADDLTDPSPATTFSHLDATIVLSRQIAELGIYPAVDPLDSTSRQLDPLVVGQDHYEIARAVQKVLQRYKELKDIIAILGMDELSDEDKKIVDRARKIQRFLSQPFHVAEVFTGNPGKFVSLKDTVASFKAIVNGEYDHLPEQAFYMVGSIQEAIEKAKTL</sequence>
<comment type="function">
    <text evidence="1">Produces ATP from ADP in the presence of a proton gradient across the membrane. The catalytic sites are hosted primarily by the beta subunits.</text>
</comment>
<comment type="catalytic activity">
    <reaction evidence="1">
        <text>ATP + H2O + 4 H(+)(in) = ADP + phosphate + 5 H(+)(out)</text>
        <dbReference type="Rhea" id="RHEA:57720"/>
        <dbReference type="ChEBI" id="CHEBI:15377"/>
        <dbReference type="ChEBI" id="CHEBI:15378"/>
        <dbReference type="ChEBI" id="CHEBI:30616"/>
        <dbReference type="ChEBI" id="CHEBI:43474"/>
        <dbReference type="ChEBI" id="CHEBI:456216"/>
        <dbReference type="EC" id="7.1.2.2"/>
    </reaction>
</comment>
<comment type="subunit">
    <text evidence="1">F-type ATPases have 2 components, CF(1) - the catalytic core - and CF(0) - the membrane proton channel. CF(1) has five subunits: alpha(3), beta(3), gamma(1), delta(1), epsilon(1). CF(0) has three main subunits: a(1), b(2) and c(9-12). The alpha and beta chains form an alternating ring which encloses part of the gamma chain. CF(1) is attached to CF(0) by a central stalk formed by the gamma and epsilon chains, while a peripheral stalk is formed by the delta and b chains.</text>
</comment>
<comment type="subcellular location">
    <subcellularLocation>
        <location evidence="1">Cell inner membrane</location>
        <topology evidence="1">Peripheral membrane protein</topology>
    </subcellularLocation>
</comment>
<comment type="similarity">
    <text evidence="1">Belongs to the ATPase alpha/beta chains family.</text>
</comment>
<evidence type="ECO:0000255" key="1">
    <source>
        <dbReference type="HAMAP-Rule" id="MF_01347"/>
    </source>
</evidence>
<feature type="chain" id="PRO_1000143510" description="ATP synthase subunit beta">
    <location>
        <begin position="1"/>
        <end position="458"/>
    </location>
</feature>
<feature type="binding site" evidence="1">
    <location>
        <begin position="148"/>
        <end position="155"/>
    </location>
    <ligand>
        <name>ATP</name>
        <dbReference type="ChEBI" id="CHEBI:30616"/>
    </ligand>
</feature>
<accession>B2SEY1</accession>
<dbReference type="EC" id="7.1.2.2" evidence="1"/>
<dbReference type="EMBL" id="CP000915">
    <property type="protein sequence ID" value="ACD30226.1"/>
    <property type="molecule type" value="Genomic_DNA"/>
</dbReference>
<dbReference type="SMR" id="B2SEY1"/>
<dbReference type="KEGG" id="ftm:FTM_0128"/>
<dbReference type="HOGENOM" id="CLU_022398_0_2_6"/>
<dbReference type="GO" id="GO:0005886">
    <property type="term" value="C:plasma membrane"/>
    <property type="evidence" value="ECO:0007669"/>
    <property type="project" value="UniProtKB-SubCell"/>
</dbReference>
<dbReference type="GO" id="GO:0045259">
    <property type="term" value="C:proton-transporting ATP synthase complex"/>
    <property type="evidence" value="ECO:0007669"/>
    <property type="project" value="UniProtKB-KW"/>
</dbReference>
<dbReference type="GO" id="GO:0005524">
    <property type="term" value="F:ATP binding"/>
    <property type="evidence" value="ECO:0007669"/>
    <property type="project" value="UniProtKB-UniRule"/>
</dbReference>
<dbReference type="GO" id="GO:0016887">
    <property type="term" value="F:ATP hydrolysis activity"/>
    <property type="evidence" value="ECO:0007669"/>
    <property type="project" value="InterPro"/>
</dbReference>
<dbReference type="GO" id="GO:0046933">
    <property type="term" value="F:proton-transporting ATP synthase activity, rotational mechanism"/>
    <property type="evidence" value="ECO:0007669"/>
    <property type="project" value="UniProtKB-UniRule"/>
</dbReference>
<dbReference type="CDD" id="cd18110">
    <property type="entry name" value="ATP-synt_F1_beta_C"/>
    <property type="match status" value="1"/>
</dbReference>
<dbReference type="CDD" id="cd18115">
    <property type="entry name" value="ATP-synt_F1_beta_N"/>
    <property type="match status" value="1"/>
</dbReference>
<dbReference type="CDD" id="cd01133">
    <property type="entry name" value="F1-ATPase_beta_CD"/>
    <property type="match status" value="1"/>
</dbReference>
<dbReference type="FunFam" id="1.10.1140.10:FF:000001">
    <property type="entry name" value="ATP synthase subunit beta"/>
    <property type="match status" value="1"/>
</dbReference>
<dbReference type="FunFam" id="2.40.10.170:FF:000003">
    <property type="entry name" value="ATP synthase subunit beta"/>
    <property type="match status" value="1"/>
</dbReference>
<dbReference type="FunFam" id="3.40.50.300:FF:000004">
    <property type="entry name" value="ATP synthase subunit beta"/>
    <property type="match status" value="1"/>
</dbReference>
<dbReference type="Gene3D" id="2.40.10.170">
    <property type="match status" value="1"/>
</dbReference>
<dbReference type="Gene3D" id="1.10.1140.10">
    <property type="entry name" value="Bovine Mitochondrial F1-atpase, Atp Synthase Beta Chain, Chain D, domain 3"/>
    <property type="match status" value="1"/>
</dbReference>
<dbReference type="Gene3D" id="3.40.50.300">
    <property type="entry name" value="P-loop containing nucleotide triphosphate hydrolases"/>
    <property type="match status" value="1"/>
</dbReference>
<dbReference type="HAMAP" id="MF_01347">
    <property type="entry name" value="ATP_synth_beta_bact"/>
    <property type="match status" value="1"/>
</dbReference>
<dbReference type="InterPro" id="IPR003593">
    <property type="entry name" value="AAA+_ATPase"/>
</dbReference>
<dbReference type="InterPro" id="IPR055190">
    <property type="entry name" value="ATP-synt_VA_C"/>
</dbReference>
<dbReference type="InterPro" id="IPR005722">
    <property type="entry name" value="ATP_synth_F1_bsu"/>
</dbReference>
<dbReference type="InterPro" id="IPR020003">
    <property type="entry name" value="ATPase_a/bsu_AS"/>
</dbReference>
<dbReference type="InterPro" id="IPR050053">
    <property type="entry name" value="ATPase_alpha/beta_chains"/>
</dbReference>
<dbReference type="InterPro" id="IPR004100">
    <property type="entry name" value="ATPase_F1/V1/A1_a/bsu_N"/>
</dbReference>
<dbReference type="InterPro" id="IPR036121">
    <property type="entry name" value="ATPase_F1/V1/A1_a/bsu_N_sf"/>
</dbReference>
<dbReference type="InterPro" id="IPR000194">
    <property type="entry name" value="ATPase_F1/V1/A1_a/bsu_nucl-bd"/>
</dbReference>
<dbReference type="InterPro" id="IPR024034">
    <property type="entry name" value="ATPase_F1/V1_b/a_C"/>
</dbReference>
<dbReference type="InterPro" id="IPR027417">
    <property type="entry name" value="P-loop_NTPase"/>
</dbReference>
<dbReference type="NCBIfam" id="TIGR01039">
    <property type="entry name" value="atpD"/>
    <property type="match status" value="1"/>
</dbReference>
<dbReference type="PANTHER" id="PTHR15184">
    <property type="entry name" value="ATP SYNTHASE"/>
    <property type="match status" value="1"/>
</dbReference>
<dbReference type="PANTHER" id="PTHR15184:SF71">
    <property type="entry name" value="ATP SYNTHASE SUBUNIT BETA, MITOCHONDRIAL"/>
    <property type="match status" value="1"/>
</dbReference>
<dbReference type="Pfam" id="PF00006">
    <property type="entry name" value="ATP-synt_ab"/>
    <property type="match status" value="1"/>
</dbReference>
<dbReference type="Pfam" id="PF02874">
    <property type="entry name" value="ATP-synt_ab_N"/>
    <property type="match status" value="1"/>
</dbReference>
<dbReference type="Pfam" id="PF22919">
    <property type="entry name" value="ATP-synt_VA_C"/>
    <property type="match status" value="1"/>
</dbReference>
<dbReference type="SMART" id="SM00382">
    <property type="entry name" value="AAA"/>
    <property type="match status" value="1"/>
</dbReference>
<dbReference type="SUPFAM" id="SSF47917">
    <property type="entry name" value="C-terminal domain of alpha and beta subunits of F1 ATP synthase"/>
    <property type="match status" value="1"/>
</dbReference>
<dbReference type="SUPFAM" id="SSF50615">
    <property type="entry name" value="N-terminal domain of alpha and beta subunits of F1 ATP synthase"/>
    <property type="match status" value="1"/>
</dbReference>
<dbReference type="SUPFAM" id="SSF52540">
    <property type="entry name" value="P-loop containing nucleoside triphosphate hydrolases"/>
    <property type="match status" value="1"/>
</dbReference>
<dbReference type="PROSITE" id="PS00152">
    <property type="entry name" value="ATPASE_ALPHA_BETA"/>
    <property type="match status" value="1"/>
</dbReference>
<reference key="1">
    <citation type="journal article" date="2009" name="PLoS Pathog.">
        <title>Molecular evolutionary consequences of niche restriction in Francisella tularensis, a facultative intracellular pathogen.</title>
        <authorList>
            <person name="Larsson P."/>
            <person name="Elfsmark D."/>
            <person name="Svensson K."/>
            <person name="Wikstroem P."/>
            <person name="Forsman M."/>
            <person name="Brettin T."/>
            <person name="Keim P."/>
            <person name="Johansson A."/>
        </authorList>
    </citation>
    <scope>NUCLEOTIDE SEQUENCE [LARGE SCALE GENOMIC DNA]</scope>
    <source>
        <strain>FSC147</strain>
    </source>
</reference>